<keyword id="KW-0963">Cytoplasm</keyword>
<keyword id="KW-0206">Cytoskeleton</keyword>
<keyword id="KW-0342">GTP-binding</keyword>
<keyword id="KW-0460">Magnesium</keyword>
<keyword id="KW-0479">Metal-binding</keyword>
<keyword id="KW-0493">Microtubule</keyword>
<keyword id="KW-0547">Nucleotide-binding</keyword>
<reference key="1">
    <citation type="journal article" date="2006" name="Insect Mol. Biol.">
        <title>Analysis of fat body transcriptome from the adult tsetse fly, Glossina morsitans morsitans.</title>
        <authorList>
            <person name="Attardo G.M."/>
            <person name="Strickler-Dinglasan P."/>
            <person name="Perkin S.A.H."/>
            <person name="Caler E."/>
            <person name="Bonaldo M.F."/>
            <person name="Soares M.B."/>
            <person name="El-Sayeed N.M.A."/>
            <person name="Aksoy S."/>
        </authorList>
    </citation>
    <scope>NUCLEOTIDE SEQUENCE [LARGE SCALE MRNA]</scope>
    <source>
        <tissue>Fat body</tissue>
    </source>
</reference>
<dbReference type="EMBL" id="DQ377071">
    <property type="protein sequence ID" value="ABD60995.1"/>
    <property type="molecule type" value="mRNA"/>
</dbReference>
<dbReference type="SMR" id="Q27U48"/>
<dbReference type="STRING" id="37546.Q27U48"/>
<dbReference type="EnsemblMetazoa" id="GMOY000148-RA">
    <property type="protein sequence ID" value="GMOY000148-PA"/>
    <property type="gene ID" value="GMOY000148"/>
</dbReference>
<dbReference type="VEuPathDB" id="VectorBase:GMOY000148"/>
<dbReference type="PhylomeDB" id="Q27U48"/>
<dbReference type="Proteomes" id="UP000092444">
    <property type="component" value="Unassembled WGS sequence"/>
</dbReference>
<dbReference type="GO" id="GO:0005737">
    <property type="term" value="C:cytoplasm"/>
    <property type="evidence" value="ECO:0007669"/>
    <property type="project" value="UniProtKB-KW"/>
</dbReference>
<dbReference type="GO" id="GO:0005874">
    <property type="term" value="C:microtubule"/>
    <property type="evidence" value="ECO:0007669"/>
    <property type="project" value="UniProtKB-KW"/>
</dbReference>
<dbReference type="GO" id="GO:0005525">
    <property type="term" value="F:GTP binding"/>
    <property type="evidence" value="ECO:0007669"/>
    <property type="project" value="UniProtKB-KW"/>
</dbReference>
<dbReference type="GO" id="GO:0003924">
    <property type="term" value="F:GTPase activity"/>
    <property type="evidence" value="ECO:0007669"/>
    <property type="project" value="InterPro"/>
</dbReference>
<dbReference type="GO" id="GO:0046872">
    <property type="term" value="F:metal ion binding"/>
    <property type="evidence" value="ECO:0007669"/>
    <property type="project" value="UniProtKB-KW"/>
</dbReference>
<dbReference type="GO" id="GO:0005200">
    <property type="term" value="F:structural constituent of cytoskeleton"/>
    <property type="evidence" value="ECO:0007669"/>
    <property type="project" value="InterPro"/>
</dbReference>
<dbReference type="GO" id="GO:0007017">
    <property type="term" value="P:microtubule-based process"/>
    <property type="evidence" value="ECO:0007669"/>
    <property type="project" value="InterPro"/>
</dbReference>
<dbReference type="CDD" id="cd02187">
    <property type="entry name" value="beta_tubulin"/>
    <property type="match status" value="1"/>
</dbReference>
<dbReference type="FunFam" id="1.10.287.600:FF:000006">
    <property type="entry name" value="Tubulin beta chain"/>
    <property type="match status" value="1"/>
</dbReference>
<dbReference type="FunFam" id="3.30.1330.20:FF:000002">
    <property type="entry name" value="Tubulin beta chain"/>
    <property type="match status" value="1"/>
</dbReference>
<dbReference type="FunFam" id="3.40.50.1440:FF:000003">
    <property type="entry name" value="Tubulin beta chain"/>
    <property type="match status" value="1"/>
</dbReference>
<dbReference type="Gene3D" id="1.10.287.600">
    <property type="entry name" value="Helix hairpin bin"/>
    <property type="match status" value="1"/>
</dbReference>
<dbReference type="Gene3D" id="3.30.1330.20">
    <property type="entry name" value="Tubulin/FtsZ, C-terminal domain"/>
    <property type="match status" value="1"/>
</dbReference>
<dbReference type="Gene3D" id="3.40.50.1440">
    <property type="entry name" value="Tubulin/FtsZ, GTPase domain"/>
    <property type="match status" value="1"/>
</dbReference>
<dbReference type="InterPro" id="IPR013838">
    <property type="entry name" value="Beta-tubulin_BS"/>
</dbReference>
<dbReference type="InterPro" id="IPR002453">
    <property type="entry name" value="Beta_tubulin"/>
</dbReference>
<dbReference type="InterPro" id="IPR008280">
    <property type="entry name" value="Tub_FtsZ_C"/>
</dbReference>
<dbReference type="InterPro" id="IPR000217">
    <property type="entry name" value="Tubulin"/>
</dbReference>
<dbReference type="InterPro" id="IPR037103">
    <property type="entry name" value="Tubulin/FtsZ-like_C"/>
</dbReference>
<dbReference type="InterPro" id="IPR018316">
    <property type="entry name" value="Tubulin/FtsZ_2-layer-sand-dom"/>
</dbReference>
<dbReference type="InterPro" id="IPR036525">
    <property type="entry name" value="Tubulin/FtsZ_GTPase_sf"/>
</dbReference>
<dbReference type="InterPro" id="IPR023123">
    <property type="entry name" value="Tubulin_C"/>
</dbReference>
<dbReference type="InterPro" id="IPR017975">
    <property type="entry name" value="Tubulin_CS"/>
</dbReference>
<dbReference type="InterPro" id="IPR003008">
    <property type="entry name" value="Tubulin_FtsZ_GTPase"/>
</dbReference>
<dbReference type="PANTHER" id="PTHR11588">
    <property type="entry name" value="TUBULIN"/>
    <property type="match status" value="1"/>
</dbReference>
<dbReference type="Pfam" id="PF00091">
    <property type="entry name" value="Tubulin"/>
    <property type="match status" value="1"/>
</dbReference>
<dbReference type="Pfam" id="PF03953">
    <property type="entry name" value="Tubulin_C"/>
    <property type="match status" value="1"/>
</dbReference>
<dbReference type="PRINTS" id="PR01163">
    <property type="entry name" value="BETATUBULIN"/>
</dbReference>
<dbReference type="PRINTS" id="PR01161">
    <property type="entry name" value="TUBULIN"/>
</dbReference>
<dbReference type="SMART" id="SM00864">
    <property type="entry name" value="Tubulin"/>
    <property type="match status" value="1"/>
</dbReference>
<dbReference type="SMART" id="SM00865">
    <property type="entry name" value="Tubulin_C"/>
    <property type="match status" value="1"/>
</dbReference>
<dbReference type="SUPFAM" id="SSF55307">
    <property type="entry name" value="Tubulin C-terminal domain-like"/>
    <property type="match status" value="1"/>
</dbReference>
<dbReference type="SUPFAM" id="SSF52490">
    <property type="entry name" value="Tubulin nucleotide-binding domain-like"/>
    <property type="match status" value="1"/>
</dbReference>
<dbReference type="PROSITE" id="PS00227">
    <property type="entry name" value="TUBULIN"/>
    <property type="match status" value="1"/>
</dbReference>
<dbReference type="PROSITE" id="PS00228">
    <property type="entry name" value="TUBULIN_B_AUTOREG"/>
    <property type="match status" value="1"/>
</dbReference>
<name>TBB1_GLOMM</name>
<proteinExistence type="evidence at transcript level"/>
<accession>Q27U48</accession>
<feature type="chain" id="PRO_0000291646" description="Tubulin beta-1 chain">
    <location>
        <begin position="1"/>
        <end position="447"/>
    </location>
</feature>
<feature type="region of interest" description="Disordered" evidence="4">
    <location>
        <begin position="427"/>
        <end position="447"/>
    </location>
</feature>
<feature type="compositionally biased region" description="Acidic residues" evidence="4">
    <location>
        <begin position="429"/>
        <end position="447"/>
    </location>
</feature>
<feature type="binding site" evidence="3">
    <location>
        <position position="11"/>
    </location>
    <ligand>
        <name>GTP</name>
        <dbReference type="ChEBI" id="CHEBI:37565"/>
    </ligand>
</feature>
<feature type="binding site" evidence="2">
    <location>
        <position position="69"/>
    </location>
    <ligand>
        <name>GTP</name>
        <dbReference type="ChEBI" id="CHEBI:37565"/>
    </ligand>
</feature>
<feature type="binding site" evidence="2">
    <location>
        <position position="69"/>
    </location>
    <ligand>
        <name>Mg(2+)</name>
        <dbReference type="ChEBI" id="CHEBI:18420"/>
    </ligand>
</feature>
<feature type="binding site" evidence="3">
    <location>
        <position position="138"/>
    </location>
    <ligand>
        <name>GTP</name>
        <dbReference type="ChEBI" id="CHEBI:37565"/>
    </ligand>
</feature>
<feature type="binding site" evidence="3">
    <location>
        <position position="142"/>
    </location>
    <ligand>
        <name>GTP</name>
        <dbReference type="ChEBI" id="CHEBI:37565"/>
    </ligand>
</feature>
<feature type="binding site" evidence="3">
    <location>
        <position position="143"/>
    </location>
    <ligand>
        <name>GTP</name>
        <dbReference type="ChEBI" id="CHEBI:37565"/>
    </ligand>
</feature>
<feature type="binding site" evidence="3">
    <location>
        <position position="144"/>
    </location>
    <ligand>
        <name>GTP</name>
        <dbReference type="ChEBI" id="CHEBI:37565"/>
    </ligand>
</feature>
<feature type="binding site" evidence="3">
    <location>
        <position position="204"/>
    </location>
    <ligand>
        <name>GTP</name>
        <dbReference type="ChEBI" id="CHEBI:37565"/>
    </ligand>
</feature>
<feature type="binding site" evidence="3">
    <location>
        <position position="226"/>
    </location>
    <ligand>
        <name>GTP</name>
        <dbReference type="ChEBI" id="CHEBI:37565"/>
    </ligand>
</feature>
<organism>
    <name type="scientific">Glossina morsitans morsitans</name>
    <name type="common">Savannah tsetse fly</name>
    <dbReference type="NCBI Taxonomy" id="37546"/>
    <lineage>
        <taxon>Eukaryota</taxon>
        <taxon>Metazoa</taxon>
        <taxon>Ecdysozoa</taxon>
        <taxon>Arthropoda</taxon>
        <taxon>Hexapoda</taxon>
        <taxon>Insecta</taxon>
        <taxon>Pterygota</taxon>
        <taxon>Neoptera</taxon>
        <taxon>Endopterygota</taxon>
        <taxon>Diptera</taxon>
        <taxon>Brachycera</taxon>
        <taxon>Muscomorpha</taxon>
        <taxon>Hippoboscoidea</taxon>
        <taxon>Glossinidae</taxon>
        <taxon>Glossina</taxon>
    </lineage>
</organism>
<protein>
    <recommendedName>
        <fullName>Tubulin beta-1 chain</fullName>
    </recommendedName>
    <alternativeName>
        <fullName>Beta-1-tubulin</fullName>
    </alternativeName>
</protein>
<comment type="function">
    <text>Tubulin is the major constituent of microtubules, a cylinder consisting of laterally associated linear protofilaments composed of alpha- and beta-tubulin heterodimers. Microtubules grow by the addition of GTP-tubulin dimers to the microtubule end, where a stabilizing cap forms. Below the cap, tubulin dimers are in GDP-bound state, owing to GTPase activity of alpha-tubulin.</text>
</comment>
<comment type="cofactor">
    <cofactor evidence="2">
        <name>Mg(2+)</name>
        <dbReference type="ChEBI" id="CHEBI:18420"/>
    </cofactor>
</comment>
<comment type="subunit">
    <text>Dimer of alpha and beta chains. A typical microtubule is a hollow water-filled tube with an outer diameter of 25 nm and an inner diameter of 15 nM. Alpha-beta heterodimers associate head-to-tail to form protofilaments running lengthwise along the microtubule wall with the beta-tubulin subunit facing the microtubule plus end conferring a structural polarity. Microtubules usually have 13 protofilaments but different protofilament numbers can be found in some organisms and specialized cells.</text>
</comment>
<comment type="subcellular location">
    <subcellularLocation>
        <location evidence="1">Cytoplasm</location>
        <location evidence="1">Cytoskeleton</location>
    </subcellularLocation>
</comment>
<comment type="similarity">
    <text evidence="5">Belongs to the tubulin family.</text>
</comment>
<evidence type="ECO:0000250" key="1"/>
<evidence type="ECO:0000250" key="2">
    <source>
        <dbReference type="UniProtKB" id="P68363"/>
    </source>
</evidence>
<evidence type="ECO:0000250" key="3">
    <source>
        <dbReference type="UniProtKB" id="Q13509"/>
    </source>
</evidence>
<evidence type="ECO:0000256" key="4">
    <source>
        <dbReference type="SAM" id="MobiDB-lite"/>
    </source>
</evidence>
<evidence type="ECO:0000305" key="5"/>
<sequence>MREIVHIQAGQCGNQIGAKFWEIISDEHGIDATGAYHGDSDLQLERINVYYNEASGGKYVPRAVLVDLEPGTMDSVRSGPFGQIFRPDNFVFGQSGAGNNWAKGHYTEGAELVDSVLDVVRKEAESCDCLQGFQLTHSLGGGTGSGMGTLLISKIREEYPDRIMNTYSVVPSPKVSDTVVEPYNATLSVHQLVENTDETYCIDNEALYDICFRTLKLTTPTYGDLNHLVSLTMSGVTTCLRFPGQLNADLRKLAVNMVPFPRLHFFMPGFAPLTSRGSQQYRALTVPELTQQMFDAKNMMAACDPRHGRYLTVAAIFRGRMSMKEVDEQMLNIQNKNSSYFVEWIPNNVKTAVCDIPPRGLKMSATFIGNSTAIQELFKRISEQFTAMFRRKAFLHWYTGEGMDEMEFTEAESNMNDLVSEYQQYQEATADEDAEFEEEQEAEVEEN</sequence>